<sequence>MKEVVIYTDGACSKNPGPGGWCAILIYKGIKKVLKGFEENTTNNRMELKAIIEGLKALKEPCKVTVYTDSAYIVNAINQNWIGKWQKNNWKTSEKEEVKNIDLWQELLEFLKVHNVKFEKVKGHSTDTLNNMCDEIARSMIKEMR</sequence>
<protein>
    <recommendedName>
        <fullName evidence="1">Ribonuclease H</fullName>
        <shortName evidence="1">RNase H</shortName>
        <ecNumber evidence="1">3.1.26.4</ecNumber>
    </recommendedName>
</protein>
<name>RNH_CALS8</name>
<evidence type="ECO:0000255" key="1">
    <source>
        <dbReference type="HAMAP-Rule" id="MF_00042"/>
    </source>
</evidence>
<evidence type="ECO:0000255" key="2">
    <source>
        <dbReference type="PROSITE-ProRule" id="PRU00408"/>
    </source>
</evidence>
<reference key="1">
    <citation type="submission" date="2007-04" db="EMBL/GenBank/DDBJ databases">
        <title>Genome sequence of the thermophilic hydrogen-producing bacterium Caldicellulosiruptor saccharolyticus DSM 8903.</title>
        <authorList>
            <person name="Copeland A."/>
            <person name="Lucas S."/>
            <person name="Lapidus A."/>
            <person name="Barry K."/>
            <person name="Detter J.C."/>
            <person name="Glavina del Rio T."/>
            <person name="Hammon N."/>
            <person name="Israni S."/>
            <person name="Dalin E."/>
            <person name="Tice H."/>
            <person name="Pitluck S."/>
            <person name="Kiss H."/>
            <person name="Brettin T."/>
            <person name="Bruce D."/>
            <person name="Han C."/>
            <person name="Schmutz J."/>
            <person name="Larimer F."/>
            <person name="Land M."/>
            <person name="Hauser L."/>
            <person name="Kyrpides N."/>
            <person name="Lykidis A."/>
            <person name="van de Werken H.J.G."/>
            <person name="Verhaart M.R.A."/>
            <person name="VanFossen A.L."/>
            <person name="Lewis D.L."/>
            <person name="Nichols J.D."/>
            <person name="Goorissen H.P."/>
            <person name="van Niel E.W.J."/>
            <person name="Stams F.J.M."/>
            <person name="Willquist K.U."/>
            <person name="Ward D.E."/>
            <person name="van der Oost J."/>
            <person name="Kelly R.M."/>
            <person name="Kengen S.M.W."/>
            <person name="Richardson P."/>
        </authorList>
    </citation>
    <scope>NUCLEOTIDE SEQUENCE [LARGE SCALE GENOMIC DNA]</scope>
    <source>
        <strain>ATCC 43494 / DSM 8903 / Tp8T 6331</strain>
    </source>
</reference>
<keyword id="KW-0963">Cytoplasm</keyword>
<keyword id="KW-0255">Endonuclease</keyword>
<keyword id="KW-0378">Hydrolase</keyword>
<keyword id="KW-0460">Magnesium</keyword>
<keyword id="KW-0479">Metal-binding</keyword>
<keyword id="KW-0540">Nuclease</keyword>
<proteinExistence type="inferred from homology"/>
<accession>A4XKQ3</accession>
<dbReference type="EC" id="3.1.26.4" evidence="1"/>
<dbReference type="EMBL" id="CP000679">
    <property type="protein sequence ID" value="ABP67488.1"/>
    <property type="molecule type" value="Genomic_DNA"/>
</dbReference>
<dbReference type="RefSeq" id="WP_011917424.1">
    <property type="nucleotide sequence ID" value="NC_009437.1"/>
</dbReference>
<dbReference type="SMR" id="A4XKQ3"/>
<dbReference type="STRING" id="351627.Csac_1903"/>
<dbReference type="KEGG" id="csc:Csac_1903"/>
<dbReference type="eggNOG" id="COG0328">
    <property type="taxonomic scope" value="Bacteria"/>
</dbReference>
<dbReference type="HOGENOM" id="CLU_030894_6_2_9"/>
<dbReference type="OrthoDB" id="7845843at2"/>
<dbReference type="Proteomes" id="UP000000256">
    <property type="component" value="Chromosome"/>
</dbReference>
<dbReference type="GO" id="GO:0005737">
    <property type="term" value="C:cytoplasm"/>
    <property type="evidence" value="ECO:0007669"/>
    <property type="project" value="UniProtKB-SubCell"/>
</dbReference>
<dbReference type="GO" id="GO:0000287">
    <property type="term" value="F:magnesium ion binding"/>
    <property type="evidence" value="ECO:0007669"/>
    <property type="project" value="UniProtKB-UniRule"/>
</dbReference>
<dbReference type="GO" id="GO:0003676">
    <property type="term" value="F:nucleic acid binding"/>
    <property type="evidence" value="ECO:0007669"/>
    <property type="project" value="InterPro"/>
</dbReference>
<dbReference type="GO" id="GO:0004523">
    <property type="term" value="F:RNA-DNA hybrid ribonuclease activity"/>
    <property type="evidence" value="ECO:0007669"/>
    <property type="project" value="UniProtKB-UniRule"/>
</dbReference>
<dbReference type="GO" id="GO:0043137">
    <property type="term" value="P:DNA replication, removal of RNA primer"/>
    <property type="evidence" value="ECO:0007669"/>
    <property type="project" value="TreeGrafter"/>
</dbReference>
<dbReference type="CDD" id="cd09278">
    <property type="entry name" value="RNase_HI_prokaryote_like"/>
    <property type="match status" value="1"/>
</dbReference>
<dbReference type="FunFam" id="3.30.420.10:FF:000089">
    <property type="entry name" value="Ribonuclease H"/>
    <property type="match status" value="1"/>
</dbReference>
<dbReference type="Gene3D" id="3.30.420.10">
    <property type="entry name" value="Ribonuclease H-like superfamily/Ribonuclease H"/>
    <property type="match status" value="1"/>
</dbReference>
<dbReference type="HAMAP" id="MF_00042">
    <property type="entry name" value="RNase_H"/>
    <property type="match status" value="1"/>
</dbReference>
<dbReference type="InterPro" id="IPR050092">
    <property type="entry name" value="RNase_H"/>
</dbReference>
<dbReference type="InterPro" id="IPR012337">
    <property type="entry name" value="RNaseH-like_sf"/>
</dbReference>
<dbReference type="InterPro" id="IPR002156">
    <property type="entry name" value="RNaseH_domain"/>
</dbReference>
<dbReference type="InterPro" id="IPR036397">
    <property type="entry name" value="RNaseH_sf"/>
</dbReference>
<dbReference type="InterPro" id="IPR022892">
    <property type="entry name" value="RNaseHI"/>
</dbReference>
<dbReference type="NCBIfam" id="NF001236">
    <property type="entry name" value="PRK00203.1"/>
    <property type="match status" value="1"/>
</dbReference>
<dbReference type="PANTHER" id="PTHR10642">
    <property type="entry name" value="RIBONUCLEASE H1"/>
    <property type="match status" value="1"/>
</dbReference>
<dbReference type="PANTHER" id="PTHR10642:SF26">
    <property type="entry name" value="RIBONUCLEASE H1"/>
    <property type="match status" value="1"/>
</dbReference>
<dbReference type="Pfam" id="PF00075">
    <property type="entry name" value="RNase_H"/>
    <property type="match status" value="1"/>
</dbReference>
<dbReference type="SUPFAM" id="SSF53098">
    <property type="entry name" value="Ribonuclease H-like"/>
    <property type="match status" value="1"/>
</dbReference>
<dbReference type="PROSITE" id="PS50879">
    <property type="entry name" value="RNASE_H_1"/>
    <property type="match status" value="1"/>
</dbReference>
<organism>
    <name type="scientific">Caldicellulosiruptor saccharolyticus (strain ATCC 43494 / DSM 8903 / Tp8T 6331)</name>
    <dbReference type="NCBI Taxonomy" id="351627"/>
    <lineage>
        <taxon>Bacteria</taxon>
        <taxon>Bacillati</taxon>
        <taxon>Bacillota</taxon>
        <taxon>Bacillota incertae sedis</taxon>
        <taxon>Caldicellulosiruptorales</taxon>
        <taxon>Caldicellulosiruptoraceae</taxon>
        <taxon>Caldicellulosiruptor</taxon>
    </lineage>
</organism>
<comment type="function">
    <text evidence="1">Endonuclease that specifically degrades the RNA of RNA-DNA hybrids.</text>
</comment>
<comment type="catalytic activity">
    <reaction evidence="1">
        <text>Endonucleolytic cleavage to 5'-phosphomonoester.</text>
        <dbReference type="EC" id="3.1.26.4"/>
    </reaction>
</comment>
<comment type="cofactor">
    <cofactor evidence="1">
        <name>Mg(2+)</name>
        <dbReference type="ChEBI" id="CHEBI:18420"/>
    </cofactor>
    <text evidence="1">Binds 1 Mg(2+) ion per subunit. May bind a second metal ion at a regulatory site, or after substrate binding.</text>
</comment>
<comment type="subunit">
    <text evidence="1">Monomer.</text>
</comment>
<comment type="subcellular location">
    <subcellularLocation>
        <location evidence="1">Cytoplasm</location>
    </subcellularLocation>
</comment>
<comment type="similarity">
    <text evidence="1">Belongs to the RNase H family.</text>
</comment>
<feature type="chain" id="PRO_0000332570" description="Ribonuclease H">
    <location>
        <begin position="1"/>
        <end position="145"/>
    </location>
</feature>
<feature type="domain" description="RNase H type-1" evidence="2">
    <location>
        <begin position="1"/>
        <end position="142"/>
    </location>
</feature>
<feature type="binding site" evidence="1">
    <location>
        <position position="9"/>
    </location>
    <ligand>
        <name>Mg(2+)</name>
        <dbReference type="ChEBI" id="CHEBI:18420"/>
        <label>1</label>
    </ligand>
</feature>
<feature type="binding site" evidence="1">
    <location>
        <position position="9"/>
    </location>
    <ligand>
        <name>Mg(2+)</name>
        <dbReference type="ChEBI" id="CHEBI:18420"/>
        <label>2</label>
    </ligand>
</feature>
<feature type="binding site" evidence="1">
    <location>
        <position position="47"/>
    </location>
    <ligand>
        <name>Mg(2+)</name>
        <dbReference type="ChEBI" id="CHEBI:18420"/>
        <label>1</label>
    </ligand>
</feature>
<feature type="binding site" evidence="1">
    <location>
        <position position="69"/>
    </location>
    <ligand>
        <name>Mg(2+)</name>
        <dbReference type="ChEBI" id="CHEBI:18420"/>
        <label>1</label>
    </ligand>
</feature>
<feature type="binding site" evidence="1">
    <location>
        <position position="134"/>
    </location>
    <ligand>
        <name>Mg(2+)</name>
        <dbReference type="ChEBI" id="CHEBI:18420"/>
        <label>2</label>
    </ligand>
</feature>
<gene>
    <name evidence="1" type="primary">rnhA</name>
    <name type="ordered locus">Csac_1903</name>
</gene>